<organism>
    <name type="scientific">Saccharomyces cerevisiae (strain ATCC 204508 / S288c)</name>
    <name type="common">Baker's yeast</name>
    <dbReference type="NCBI Taxonomy" id="559292"/>
    <lineage>
        <taxon>Eukaryota</taxon>
        <taxon>Fungi</taxon>
        <taxon>Dikarya</taxon>
        <taxon>Ascomycota</taxon>
        <taxon>Saccharomycotina</taxon>
        <taxon>Saccharomycetes</taxon>
        <taxon>Saccharomycetales</taxon>
        <taxon>Saccharomycetaceae</taxon>
        <taxon>Saccharomyces</taxon>
    </lineage>
</organism>
<comment type="similarity">
    <text evidence="2">To yeast YMR316w.</text>
</comment>
<name>YNQ5_YEAST</name>
<sequence length="406" mass="46177">MDRVRSLIGNRRGRRHNRQHPPYPHSGSPSTVNLLGANGYGDDQSTIFARENESLETSANEGDDSADAATLNTAVSEGSTIGDLQRQGYVNRAPRFTSERAMPFVSVLLQRGFFAFPSEESLQLFLHNKRKLDNIDPKRGLGLPLFHAISLNLVKSLFSDQNTPVMRIYKYVMIDSQCDKPPLNSEVVSRINENVSIYKYEFCTILKKMESHNFSSRVEHDFIFHRKDEPDVHIPMINYNQRKNADTAIHGLNLRWYGTTSLASPFGSNSINLLVLDDTMASYMNQQTIEEFDSYSRSRPTRPLGYLPVWARYTDDKVSVIPKKRTLRVATLYLQETDSFDDGSSLTSTNYTEMGSNIIENVPWDSQILTCMCMLLHEYESRKEKRHTAWGSSTTYMLNGPAGLLM</sequence>
<keyword id="KW-1185">Reference proteome</keyword>
<feature type="chain" id="PRO_0000203412" description="Uncharacterized protein YNL165W">
    <location>
        <begin position="1"/>
        <end position="406"/>
    </location>
</feature>
<feature type="region of interest" description="Disordered" evidence="1">
    <location>
        <begin position="1"/>
        <end position="36"/>
    </location>
</feature>
<dbReference type="EMBL" id="X92517">
    <property type="protein sequence ID" value="CAA63274.1"/>
    <property type="molecule type" value="Genomic_DNA"/>
</dbReference>
<dbReference type="EMBL" id="Z71441">
    <property type="protein sequence ID" value="CAA96052.1"/>
    <property type="molecule type" value="Genomic_DNA"/>
</dbReference>
<dbReference type="EMBL" id="BK006947">
    <property type="protein sequence ID" value="DAA10383.1"/>
    <property type="molecule type" value="Genomic_DNA"/>
</dbReference>
<dbReference type="PIR" id="S60962">
    <property type="entry name" value="S60962"/>
</dbReference>
<dbReference type="RefSeq" id="NP_014234.3">
    <property type="nucleotide sequence ID" value="NM_001183003.3"/>
</dbReference>
<dbReference type="BioGRID" id="35663">
    <property type="interactions" value="69"/>
</dbReference>
<dbReference type="DIP" id="DIP-4336N"/>
<dbReference type="FunCoup" id="P53891">
    <property type="interactions" value="28"/>
</dbReference>
<dbReference type="IntAct" id="P53891">
    <property type="interactions" value="1"/>
</dbReference>
<dbReference type="iPTMnet" id="P53891"/>
<dbReference type="PaxDb" id="4932-YNL165W"/>
<dbReference type="PeptideAtlas" id="P53891"/>
<dbReference type="EnsemblFungi" id="YNL165W_mRNA">
    <property type="protein sequence ID" value="YNL165W"/>
    <property type="gene ID" value="YNL165W"/>
</dbReference>
<dbReference type="GeneID" id="855556"/>
<dbReference type="KEGG" id="sce:YNL165W"/>
<dbReference type="AGR" id="SGD:S000005109"/>
<dbReference type="SGD" id="S000005109">
    <property type="gene designation" value="YNL165W"/>
</dbReference>
<dbReference type="VEuPathDB" id="FungiDB:YNL165W"/>
<dbReference type="eggNOG" id="ENOG502QR9U">
    <property type="taxonomic scope" value="Eukaryota"/>
</dbReference>
<dbReference type="HOGENOM" id="CLU_065220_0_0_1"/>
<dbReference type="InParanoid" id="P53891"/>
<dbReference type="OMA" id="GLNLRWY"/>
<dbReference type="OrthoDB" id="4063705at2759"/>
<dbReference type="BioCyc" id="YEAST:G3O-33181-MONOMER"/>
<dbReference type="BioGRID-ORCS" id="855556">
    <property type="hits" value="0 hits in 10 CRISPR screens"/>
</dbReference>
<dbReference type="PRO" id="PR:P53891"/>
<dbReference type="Proteomes" id="UP000002311">
    <property type="component" value="Chromosome XIV"/>
</dbReference>
<dbReference type="RNAct" id="P53891">
    <property type="molecule type" value="protein"/>
</dbReference>
<accession>P53891</accession>
<accession>D6W117</accession>
<evidence type="ECO:0000256" key="1">
    <source>
        <dbReference type="SAM" id="MobiDB-lite"/>
    </source>
</evidence>
<evidence type="ECO:0000305" key="2"/>
<proteinExistence type="predicted"/>
<reference key="1">
    <citation type="journal article" date="1996" name="Yeast">
        <title>The sequence of 36.8 kb from the left arm of chromosome XIV reveals 24 complete open reading frames: 18 correspond to new genes, one of which encodes a protein similar to the human myotonic dystrophy kinase.</title>
        <authorList>
            <person name="Nasr F."/>
            <person name="Becam A.-M."/>
            <person name="Herbert C.J."/>
        </authorList>
    </citation>
    <scope>NUCLEOTIDE SEQUENCE [GENOMIC DNA]</scope>
    <source>
        <strain>ATCC 96604 / S288c / FY1679</strain>
    </source>
</reference>
<reference key="2">
    <citation type="journal article" date="1997" name="Nature">
        <title>The nucleotide sequence of Saccharomyces cerevisiae chromosome XIV and its evolutionary implications.</title>
        <authorList>
            <person name="Philippsen P."/>
            <person name="Kleine K."/>
            <person name="Poehlmann R."/>
            <person name="Duesterhoeft A."/>
            <person name="Hamberg K."/>
            <person name="Hegemann J.H."/>
            <person name="Obermaier B."/>
            <person name="Urrestarazu L.A."/>
            <person name="Aert R."/>
            <person name="Albermann K."/>
            <person name="Altmann R."/>
            <person name="Andre B."/>
            <person name="Baladron V."/>
            <person name="Ballesta J.P.G."/>
            <person name="Becam A.-M."/>
            <person name="Beinhauer J.D."/>
            <person name="Boskovic J."/>
            <person name="Buitrago M.J."/>
            <person name="Bussereau F."/>
            <person name="Coster F."/>
            <person name="Crouzet M."/>
            <person name="D'Angelo M."/>
            <person name="Dal Pero F."/>
            <person name="De Antoni A."/>
            <person name="del Rey F."/>
            <person name="Doignon F."/>
            <person name="Domdey H."/>
            <person name="Dubois E."/>
            <person name="Fiedler T.A."/>
            <person name="Fleig U."/>
            <person name="Floeth M."/>
            <person name="Fritz C."/>
            <person name="Gaillardin C."/>
            <person name="Garcia-Cantalejo J.M."/>
            <person name="Glansdorff N."/>
            <person name="Goffeau A."/>
            <person name="Gueldener U."/>
            <person name="Herbert C.J."/>
            <person name="Heumann K."/>
            <person name="Heuss-Neitzel D."/>
            <person name="Hilbert H."/>
            <person name="Hinni K."/>
            <person name="Iraqui Houssaini I."/>
            <person name="Jacquet M."/>
            <person name="Jimenez A."/>
            <person name="Jonniaux J.-L."/>
            <person name="Karpfinger-Hartl L."/>
            <person name="Lanfranchi G."/>
            <person name="Lepingle A."/>
            <person name="Levesque H."/>
            <person name="Lyck R."/>
            <person name="Maftahi M."/>
            <person name="Mallet L."/>
            <person name="Maurer C.T.C."/>
            <person name="Messenguy F."/>
            <person name="Mewes H.-W."/>
            <person name="Moestl D."/>
            <person name="Nasr F."/>
            <person name="Nicaud J.-M."/>
            <person name="Niedenthal R.K."/>
            <person name="Pandolfo D."/>
            <person name="Pierard A."/>
            <person name="Piravandi E."/>
            <person name="Planta R.J."/>
            <person name="Pohl T.M."/>
            <person name="Purnelle B."/>
            <person name="Rebischung C."/>
            <person name="Remacha M.A."/>
            <person name="Revuelta J.L."/>
            <person name="Rinke M."/>
            <person name="Saiz J.E."/>
            <person name="Sartorello F."/>
            <person name="Scherens B."/>
            <person name="Sen-Gupta M."/>
            <person name="Soler-Mira A."/>
            <person name="Urbanus J.H.M."/>
            <person name="Valle G."/>
            <person name="Van Dyck L."/>
            <person name="Verhasselt P."/>
            <person name="Vierendeels F."/>
            <person name="Vissers S."/>
            <person name="Voet M."/>
            <person name="Volckaert G."/>
            <person name="Wach A."/>
            <person name="Wambutt R."/>
            <person name="Wedler H."/>
            <person name="Zollner A."/>
            <person name="Hani J."/>
        </authorList>
    </citation>
    <scope>NUCLEOTIDE SEQUENCE [LARGE SCALE GENOMIC DNA]</scope>
    <source>
        <strain>ATCC 204508 / S288c</strain>
    </source>
</reference>
<reference key="3">
    <citation type="journal article" date="2014" name="G3 (Bethesda)">
        <title>The reference genome sequence of Saccharomyces cerevisiae: Then and now.</title>
        <authorList>
            <person name="Engel S.R."/>
            <person name="Dietrich F.S."/>
            <person name="Fisk D.G."/>
            <person name="Binkley G."/>
            <person name="Balakrishnan R."/>
            <person name="Costanzo M.C."/>
            <person name="Dwight S.S."/>
            <person name="Hitz B.C."/>
            <person name="Karra K."/>
            <person name="Nash R.S."/>
            <person name="Weng S."/>
            <person name="Wong E.D."/>
            <person name="Lloyd P."/>
            <person name="Skrzypek M.S."/>
            <person name="Miyasato S.R."/>
            <person name="Simison M."/>
            <person name="Cherry J.M."/>
        </authorList>
    </citation>
    <scope>GENOME REANNOTATION</scope>
    <source>
        <strain>ATCC 204508 / S288c</strain>
    </source>
</reference>
<protein>
    <recommendedName>
        <fullName>Uncharacterized protein YNL165W</fullName>
    </recommendedName>
</protein>
<gene>
    <name type="ordered locus">YNL165W</name>
    <name type="ORF">N1710</name>
</gene>